<feature type="chain" id="PRO_1000073622" description="ADP-L-glycero-D-manno-heptose-6-epimerase">
    <location>
        <begin position="1"/>
        <end position="314"/>
    </location>
</feature>
<feature type="active site" description="Proton acceptor" evidence="1">
    <location>
        <position position="139"/>
    </location>
</feature>
<feature type="active site" description="Proton acceptor" evidence="1">
    <location>
        <position position="183"/>
    </location>
</feature>
<feature type="binding site" evidence="1">
    <location>
        <begin position="10"/>
        <end position="11"/>
    </location>
    <ligand>
        <name>NADP(+)</name>
        <dbReference type="ChEBI" id="CHEBI:58349"/>
    </ligand>
</feature>
<feature type="binding site" evidence="1">
    <location>
        <begin position="31"/>
        <end position="32"/>
    </location>
    <ligand>
        <name>NADP(+)</name>
        <dbReference type="ChEBI" id="CHEBI:58349"/>
    </ligand>
</feature>
<feature type="binding site" evidence="1">
    <location>
        <position position="38"/>
    </location>
    <ligand>
        <name>NADP(+)</name>
        <dbReference type="ChEBI" id="CHEBI:58349"/>
    </ligand>
</feature>
<feature type="binding site" evidence="1">
    <location>
        <position position="53"/>
    </location>
    <ligand>
        <name>NADP(+)</name>
        <dbReference type="ChEBI" id="CHEBI:58349"/>
    </ligand>
</feature>
<feature type="binding site" evidence="1">
    <location>
        <begin position="75"/>
        <end position="79"/>
    </location>
    <ligand>
        <name>NADP(+)</name>
        <dbReference type="ChEBI" id="CHEBI:58349"/>
    </ligand>
</feature>
<feature type="binding site" evidence="1">
    <location>
        <position position="92"/>
    </location>
    <ligand>
        <name>NADP(+)</name>
        <dbReference type="ChEBI" id="CHEBI:58349"/>
    </ligand>
</feature>
<feature type="binding site" evidence="1">
    <location>
        <position position="143"/>
    </location>
    <ligand>
        <name>NADP(+)</name>
        <dbReference type="ChEBI" id="CHEBI:58349"/>
    </ligand>
</feature>
<feature type="binding site" evidence="1">
    <location>
        <position position="174"/>
    </location>
    <ligand>
        <name>substrate</name>
    </ligand>
</feature>
<feature type="binding site" evidence="1">
    <location>
        <position position="175"/>
    </location>
    <ligand>
        <name>NADP(+)</name>
        <dbReference type="ChEBI" id="CHEBI:58349"/>
    </ligand>
</feature>
<feature type="binding site" evidence="1">
    <location>
        <position position="183"/>
    </location>
    <ligand>
        <name>NADP(+)</name>
        <dbReference type="ChEBI" id="CHEBI:58349"/>
    </ligand>
</feature>
<feature type="binding site" evidence="1">
    <location>
        <position position="185"/>
    </location>
    <ligand>
        <name>substrate</name>
    </ligand>
</feature>
<feature type="binding site" evidence="1">
    <location>
        <position position="192"/>
    </location>
    <ligand>
        <name>substrate</name>
    </ligand>
</feature>
<feature type="binding site" evidence="1">
    <location>
        <begin position="206"/>
        <end position="209"/>
    </location>
    <ligand>
        <name>substrate</name>
    </ligand>
</feature>
<feature type="binding site" evidence="1">
    <location>
        <position position="214"/>
    </location>
    <ligand>
        <name>substrate</name>
    </ligand>
</feature>
<feature type="binding site" evidence="1">
    <location>
        <position position="277"/>
    </location>
    <ligand>
        <name>substrate</name>
    </ligand>
</feature>
<comment type="function">
    <text evidence="1">Catalyzes the interconversion between ADP-D-glycero-beta-D-manno-heptose and ADP-L-glycero-beta-D-manno-heptose via an epimerization at carbon 6 of the heptose.</text>
</comment>
<comment type="catalytic activity">
    <reaction evidence="1">
        <text>ADP-D-glycero-beta-D-manno-heptose = ADP-L-glycero-beta-D-manno-heptose</text>
        <dbReference type="Rhea" id="RHEA:17577"/>
        <dbReference type="ChEBI" id="CHEBI:59967"/>
        <dbReference type="ChEBI" id="CHEBI:61506"/>
        <dbReference type="EC" id="5.1.3.20"/>
    </reaction>
</comment>
<comment type="cofactor">
    <cofactor evidence="1">
        <name>NADP(+)</name>
        <dbReference type="ChEBI" id="CHEBI:58349"/>
    </cofactor>
    <text evidence="1">Binds 1 NADP(+) per subunit.</text>
</comment>
<comment type="pathway">
    <text evidence="1">Nucleotide-sugar biosynthesis; ADP-L-glycero-beta-D-manno-heptose biosynthesis; ADP-L-glycero-beta-D-manno-heptose from D-glycero-beta-D-manno-heptose 7-phosphate: step 4/4.</text>
</comment>
<comment type="subunit">
    <text evidence="1">Homopentamer.</text>
</comment>
<comment type="domain">
    <text evidence="1">Contains a large N-terminal NADP-binding domain, and a smaller C-terminal substrate-binding domain.</text>
</comment>
<comment type="similarity">
    <text evidence="1">Belongs to the NAD(P)-dependent epimerase/dehydratase family. HldD subfamily.</text>
</comment>
<organism>
    <name type="scientific">Vibrio cholerae serotype O1 (strain ATCC 39541 / Classical Ogawa 395 / O395)</name>
    <dbReference type="NCBI Taxonomy" id="345073"/>
    <lineage>
        <taxon>Bacteria</taxon>
        <taxon>Pseudomonadati</taxon>
        <taxon>Pseudomonadota</taxon>
        <taxon>Gammaproteobacteria</taxon>
        <taxon>Vibrionales</taxon>
        <taxon>Vibrionaceae</taxon>
        <taxon>Vibrio</taxon>
    </lineage>
</organism>
<gene>
    <name evidence="1" type="primary">hldD</name>
    <name type="synonym">rfaD</name>
    <name type="ordered locus">VC0395_A2620</name>
    <name type="ordered locus">VC395_0272</name>
</gene>
<sequence>MIIVTGGAGMIGSNIIKALNERGITDILVVDHLKNGRKFKNLVDLQIADYMDRDDFLAQIMAGDDFGFIDAIFHEGACSATTEWDGKYVMLNNYEYSKELLHYCLDREIPFLYASSAATYGETDTFIEEPQYEGALNVYGYSKQQFDNYVRRLWLDAKQHDETLSQITGFRYFNVYGPREQHKGSMASVAFHLNNQMNAGENPKLFAGSENFKRDFVYVGDVAAVNLWFLDHGVSGIFNCGTGKAESFNEVAKAVIAFHGRGEVETIPFPDHLKGAYQEFTEADLTKLRAAGCDVQFKSVAEGVAEYMALINRK</sequence>
<name>HLDD_VIBC3</name>
<keyword id="KW-0119">Carbohydrate metabolism</keyword>
<keyword id="KW-0413">Isomerase</keyword>
<keyword id="KW-0521">NADP</keyword>
<dbReference type="EC" id="5.1.3.20" evidence="1"/>
<dbReference type="EMBL" id="CP000627">
    <property type="protein sequence ID" value="ABQ20960.1"/>
    <property type="molecule type" value="Genomic_DNA"/>
</dbReference>
<dbReference type="EMBL" id="CP001235">
    <property type="protein sequence ID" value="ACP08297.1"/>
    <property type="molecule type" value="Genomic_DNA"/>
</dbReference>
<dbReference type="RefSeq" id="WP_000587795.1">
    <property type="nucleotide sequence ID" value="NZ_JAACZH010000028.1"/>
</dbReference>
<dbReference type="SMR" id="A5F3Z4"/>
<dbReference type="KEGG" id="vco:VC0395_A2620"/>
<dbReference type="KEGG" id="vcr:VC395_0272"/>
<dbReference type="PATRIC" id="fig|345073.21.peg.260"/>
<dbReference type="eggNOG" id="COG0451">
    <property type="taxonomic scope" value="Bacteria"/>
</dbReference>
<dbReference type="HOGENOM" id="CLU_007383_1_3_6"/>
<dbReference type="OrthoDB" id="9803010at2"/>
<dbReference type="UniPathway" id="UPA00356">
    <property type="reaction ID" value="UER00440"/>
</dbReference>
<dbReference type="Proteomes" id="UP000000249">
    <property type="component" value="Chromosome 2"/>
</dbReference>
<dbReference type="GO" id="GO:0008712">
    <property type="term" value="F:ADP-glyceromanno-heptose 6-epimerase activity"/>
    <property type="evidence" value="ECO:0007669"/>
    <property type="project" value="UniProtKB-UniRule"/>
</dbReference>
<dbReference type="GO" id="GO:0050661">
    <property type="term" value="F:NADP binding"/>
    <property type="evidence" value="ECO:0007669"/>
    <property type="project" value="InterPro"/>
</dbReference>
<dbReference type="GO" id="GO:0097171">
    <property type="term" value="P:ADP-L-glycero-beta-D-manno-heptose biosynthetic process"/>
    <property type="evidence" value="ECO:0007669"/>
    <property type="project" value="UniProtKB-UniPathway"/>
</dbReference>
<dbReference type="GO" id="GO:0005975">
    <property type="term" value="P:carbohydrate metabolic process"/>
    <property type="evidence" value="ECO:0007669"/>
    <property type="project" value="UniProtKB-UniRule"/>
</dbReference>
<dbReference type="CDD" id="cd05248">
    <property type="entry name" value="ADP_GME_SDR_e"/>
    <property type="match status" value="1"/>
</dbReference>
<dbReference type="Gene3D" id="3.40.50.720">
    <property type="entry name" value="NAD(P)-binding Rossmann-like Domain"/>
    <property type="match status" value="1"/>
</dbReference>
<dbReference type="Gene3D" id="3.90.25.10">
    <property type="entry name" value="UDP-galactose 4-epimerase, domain 1"/>
    <property type="match status" value="1"/>
</dbReference>
<dbReference type="HAMAP" id="MF_01601">
    <property type="entry name" value="Heptose_epimerase"/>
    <property type="match status" value="1"/>
</dbReference>
<dbReference type="InterPro" id="IPR001509">
    <property type="entry name" value="Epimerase_deHydtase"/>
</dbReference>
<dbReference type="InterPro" id="IPR011912">
    <property type="entry name" value="Heptose_epim"/>
</dbReference>
<dbReference type="InterPro" id="IPR036291">
    <property type="entry name" value="NAD(P)-bd_dom_sf"/>
</dbReference>
<dbReference type="NCBIfam" id="TIGR02197">
    <property type="entry name" value="heptose_epim"/>
    <property type="match status" value="1"/>
</dbReference>
<dbReference type="NCBIfam" id="NF008360">
    <property type="entry name" value="PRK11150.1"/>
    <property type="match status" value="1"/>
</dbReference>
<dbReference type="PANTHER" id="PTHR43103:SF3">
    <property type="entry name" value="ADP-L-GLYCERO-D-MANNO-HEPTOSE-6-EPIMERASE"/>
    <property type="match status" value="1"/>
</dbReference>
<dbReference type="PANTHER" id="PTHR43103">
    <property type="entry name" value="NUCLEOSIDE-DIPHOSPHATE-SUGAR EPIMERASE"/>
    <property type="match status" value="1"/>
</dbReference>
<dbReference type="Pfam" id="PF01370">
    <property type="entry name" value="Epimerase"/>
    <property type="match status" value="1"/>
</dbReference>
<dbReference type="SUPFAM" id="SSF51735">
    <property type="entry name" value="NAD(P)-binding Rossmann-fold domains"/>
    <property type="match status" value="1"/>
</dbReference>
<reference key="1">
    <citation type="submission" date="2007-03" db="EMBL/GenBank/DDBJ databases">
        <authorList>
            <person name="Heidelberg J."/>
        </authorList>
    </citation>
    <scope>NUCLEOTIDE SEQUENCE [LARGE SCALE GENOMIC DNA]</scope>
    <source>
        <strain>ATCC 39541 / Classical Ogawa 395 / O395</strain>
    </source>
</reference>
<reference key="2">
    <citation type="journal article" date="2008" name="PLoS ONE">
        <title>A recalibrated molecular clock and independent origins for the cholera pandemic clones.</title>
        <authorList>
            <person name="Feng L."/>
            <person name="Reeves P.R."/>
            <person name="Lan R."/>
            <person name="Ren Y."/>
            <person name="Gao C."/>
            <person name="Zhou Z."/>
            <person name="Ren Y."/>
            <person name="Cheng J."/>
            <person name="Wang W."/>
            <person name="Wang J."/>
            <person name="Qian W."/>
            <person name="Li D."/>
            <person name="Wang L."/>
        </authorList>
    </citation>
    <scope>NUCLEOTIDE SEQUENCE [LARGE SCALE GENOMIC DNA]</scope>
    <source>
        <strain>ATCC 39541 / Classical Ogawa 395 / O395</strain>
    </source>
</reference>
<protein>
    <recommendedName>
        <fullName evidence="1">ADP-L-glycero-D-manno-heptose-6-epimerase</fullName>
        <ecNumber evidence="1">5.1.3.20</ecNumber>
    </recommendedName>
    <alternativeName>
        <fullName evidence="1">ADP-L-glycero-beta-D-manno-heptose-6-epimerase</fullName>
        <shortName evidence="1">ADP-glyceromanno-heptose 6-epimerase</shortName>
        <shortName evidence="1">ADP-hep 6-epimerase</shortName>
        <shortName evidence="1">AGME</shortName>
    </alternativeName>
</protein>
<accession>A5F3Z4</accession>
<accession>C3M3B8</accession>
<evidence type="ECO:0000255" key="1">
    <source>
        <dbReference type="HAMAP-Rule" id="MF_01601"/>
    </source>
</evidence>
<proteinExistence type="inferred from homology"/>